<keyword id="KW-0067">ATP-binding</keyword>
<keyword id="KW-0347">Helicase</keyword>
<keyword id="KW-0378">Hydrolase</keyword>
<keyword id="KW-0547">Nucleotide-binding</keyword>
<keyword id="KW-0539">Nucleus</keyword>
<keyword id="KW-1185">Reference proteome</keyword>
<keyword id="KW-0690">Ribosome biogenesis</keyword>
<keyword id="KW-0694">RNA-binding</keyword>
<keyword id="KW-0698">rRNA processing</keyword>
<accession>Q4WMS3</accession>
<comment type="function">
    <text evidence="1">ATP-binding RNA helicase involved in the biogenesis of 60S ribosomal subunits and is required for the normal formation of 25S and 5.8S rRNAs.</text>
</comment>
<comment type="catalytic activity">
    <reaction>
        <text>ATP + H2O = ADP + phosphate + H(+)</text>
        <dbReference type="Rhea" id="RHEA:13065"/>
        <dbReference type="ChEBI" id="CHEBI:15377"/>
        <dbReference type="ChEBI" id="CHEBI:15378"/>
        <dbReference type="ChEBI" id="CHEBI:30616"/>
        <dbReference type="ChEBI" id="CHEBI:43474"/>
        <dbReference type="ChEBI" id="CHEBI:456216"/>
        <dbReference type="EC" id="3.6.4.13"/>
    </reaction>
</comment>
<comment type="subcellular location">
    <subcellularLocation>
        <location evidence="1">Nucleus</location>
        <location evidence="1">Nucleolus</location>
    </subcellularLocation>
</comment>
<comment type="domain">
    <text>The Q motif is unique to and characteristic of the DEAD box family of RNA helicases and controls ATP binding and hydrolysis.</text>
</comment>
<comment type="similarity">
    <text evidence="5">Belongs to the DEAD box helicase family. DDX24/MAK5 subfamily.</text>
</comment>
<comment type="sequence caution" evidence="5">
    <conflict type="erroneous gene model prediction">
        <sequence resource="EMBL-CDS" id="EAL88741"/>
    </conflict>
</comment>
<dbReference type="EC" id="3.6.4.13"/>
<dbReference type="EMBL" id="AAHF01000006">
    <property type="protein sequence ID" value="EAL88741.1"/>
    <property type="status" value="ALT_SEQ"/>
    <property type="molecule type" value="Genomic_DNA"/>
</dbReference>
<dbReference type="RefSeq" id="XP_750779.1">
    <property type="nucleotide sequence ID" value="XM_745686.1"/>
</dbReference>
<dbReference type="SMR" id="Q4WMS3"/>
<dbReference type="FunCoup" id="Q4WMS3">
    <property type="interactions" value="927"/>
</dbReference>
<dbReference type="STRING" id="330879.Q4WMS3"/>
<dbReference type="GeneID" id="3508066"/>
<dbReference type="KEGG" id="afm:AFUA_6G08900"/>
<dbReference type="VEuPathDB" id="FungiDB:Afu6g08900"/>
<dbReference type="eggNOG" id="KOG0347">
    <property type="taxonomic scope" value="Eukaryota"/>
</dbReference>
<dbReference type="HOGENOM" id="CLU_003041_13_0_1"/>
<dbReference type="InParanoid" id="Q4WMS3"/>
<dbReference type="OrthoDB" id="4310724at2759"/>
<dbReference type="PHI-base" id="PHI:2549"/>
<dbReference type="Proteomes" id="UP000002530">
    <property type="component" value="Chromosome 6"/>
</dbReference>
<dbReference type="GO" id="GO:0005730">
    <property type="term" value="C:nucleolus"/>
    <property type="evidence" value="ECO:0000318"/>
    <property type="project" value="GO_Central"/>
</dbReference>
<dbReference type="GO" id="GO:0005524">
    <property type="term" value="F:ATP binding"/>
    <property type="evidence" value="ECO:0007669"/>
    <property type="project" value="UniProtKB-KW"/>
</dbReference>
<dbReference type="GO" id="GO:0016887">
    <property type="term" value="F:ATP hydrolysis activity"/>
    <property type="evidence" value="ECO:0007669"/>
    <property type="project" value="RHEA"/>
</dbReference>
<dbReference type="GO" id="GO:0003723">
    <property type="term" value="F:RNA binding"/>
    <property type="evidence" value="ECO:0007669"/>
    <property type="project" value="UniProtKB-KW"/>
</dbReference>
<dbReference type="GO" id="GO:0003724">
    <property type="term" value="F:RNA helicase activity"/>
    <property type="evidence" value="ECO:0007669"/>
    <property type="project" value="UniProtKB-EC"/>
</dbReference>
<dbReference type="GO" id="GO:0006364">
    <property type="term" value="P:rRNA processing"/>
    <property type="evidence" value="ECO:0007669"/>
    <property type="project" value="UniProtKB-KW"/>
</dbReference>
<dbReference type="CDD" id="cd17946">
    <property type="entry name" value="DEADc_DDX24"/>
    <property type="match status" value="1"/>
</dbReference>
<dbReference type="CDD" id="cd18787">
    <property type="entry name" value="SF2_C_DEAD"/>
    <property type="match status" value="1"/>
</dbReference>
<dbReference type="Gene3D" id="3.40.50.300">
    <property type="entry name" value="P-loop containing nucleotide triphosphate hydrolases"/>
    <property type="match status" value="2"/>
</dbReference>
<dbReference type="InterPro" id="IPR011545">
    <property type="entry name" value="DEAD/DEAH_box_helicase_dom"/>
</dbReference>
<dbReference type="InterPro" id="IPR014001">
    <property type="entry name" value="Helicase_ATP-bd"/>
</dbReference>
<dbReference type="InterPro" id="IPR001650">
    <property type="entry name" value="Helicase_C-like"/>
</dbReference>
<dbReference type="InterPro" id="IPR027417">
    <property type="entry name" value="P-loop_NTPase"/>
</dbReference>
<dbReference type="InterPro" id="IPR000629">
    <property type="entry name" value="RNA-helicase_DEAD-box_CS"/>
</dbReference>
<dbReference type="InterPro" id="IPR014014">
    <property type="entry name" value="RNA_helicase_DEAD_Q_motif"/>
</dbReference>
<dbReference type="PANTHER" id="PTHR24031">
    <property type="entry name" value="RNA HELICASE"/>
    <property type="match status" value="1"/>
</dbReference>
<dbReference type="Pfam" id="PF00270">
    <property type="entry name" value="DEAD"/>
    <property type="match status" value="1"/>
</dbReference>
<dbReference type="Pfam" id="PF00271">
    <property type="entry name" value="Helicase_C"/>
    <property type="match status" value="1"/>
</dbReference>
<dbReference type="SMART" id="SM00487">
    <property type="entry name" value="DEXDc"/>
    <property type="match status" value="1"/>
</dbReference>
<dbReference type="SMART" id="SM00490">
    <property type="entry name" value="HELICc"/>
    <property type="match status" value="1"/>
</dbReference>
<dbReference type="SUPFAM" id="SSF52540">
    <property type="entry name" value="P-loop containing nucleoside triphosphate hydrolases"/>
    <property type="match status" value="1"/>
</dbReference>
<dbReference type="PROSITE" id="PS00039">
    <property type="entry name" value="DEAD_ATP_HELICASE"/>
    <property type="match status" value="1"/>
</dbReference>
<dbReference type="PROSITE" id="PS51192">
    <property type="entry name" value="HELICASE_ATP_BIND_1"/>
    <property type="match status" value="1"/>
</dbReference>
<dbReference type="PROSITE" id="PS51194">
    <property type="entry name" value="HELICASE_CTER"/>
    <property type="match status" value="1"/>
</dbReference>
<dbReference type="PROSITE" id="PS51195">
    <property type="entry name" value="Q_MOTIF"/>
    <property type="match status" value="1"/>
</dbReference>
<evidence type="ECO:0000250" key="1"/>
<evidence type="ECO:0000255" key="2">
    <source>
        <dbReference type="PROSITE-ProRule" id="PRU00541"/>
    </source>
</evidence>
<evidence type="ECO:0000255" key="3">
    <source>
        <dbReference type="PROSITE-ProRule" id="PRU00542"/>
    </source>
</evidence>
<evidence type="ECO:0000256" key="4">
    <source>
        <dbReference type="SAM" id="MobiDB-lite"/>
    </source>
</evidence>
<evidence type="ECO:0000305" key="5"/>
<organism>
    <name type="scientific">Aspergillus fumigatus (strain ATCC MYA-4609 / CBS 101355 / FGSC A1100 / Af293)</name>
    <name type="common">Neosartorya fumigata</name>
    <dbReference type="NCBI Taxonomy" id="330879"/>
    <lineage>
        <taxon>Eukaryota</taxon>
        <taxon>Fungi</taxon>
        <taxon>Dikarya</taxon>
        <taxon>Ascomycota</taxon>
        <taxon>Pezizomycotina</taxon>
        <taxon>Eurotiomycetes</taxon>
        <taxon>Eurotiomycetidae</taxon>
        <taxon>Eurotiales</taxon>
        <taxon>Aspergillaceae</taxon>
        <taxon>Aspergillus</taxon>
        <taxon>Aspergillus subgen. Fumigati</taxon>
    </lineage>
</organism>
<reference key="1">
    <citation type="journal article" date="2005" name="Nature">
        <title>Genomic sequence of the pathogenic and allergenic filamentous fungus Aspergillus fumigatus.</title>
        <authorList>
            <person name="Nierman W.C."/>
            <person name="Pain A."/>
            <person name="Anderson M.J."/>
            <person name="Wortman J.R."/>
            <person name="Kim H.S."/>
            <person name="Arroyo J."/>
            <person name="Berriman M."/>
            <person name="Abe K."/>
            <person name="Archer D.B."/>
            <person name="Bermejo C."/>
            <person name="Bennett J.W."/>
            <person name="Bowyer P."/>
            <person name="Chen D."/>
            <person name="Collins M."/>
            <person name="Coulsen R."/>
            <person name="Davies R."/>
            <person name="Dyer P.S."/>
            <person name="Farman M.L."/>
            <person name="Fedorova N."/>
            <person name="Fedorova N.D."/>
            <person name="Feldblyum T.V."/>
            <person name="Fischer R."/>
            <person name="Fosker N."/>
            <person name="Fraser A."/>
            <person name="Garcia J.L."/>
            <person name="Garcia M.J."/>
            <person name="Goble A."/>
            <person name="Goldman G.H."/>
            <person name="Gomi K."/>
            <person name="Griffith-Jones S."/>
            <person name="Gwilliam R."/>
            <person name="Haas B.J."/>
            <person name="Haas H."/>
            <person name="Harris D.E."/>
            <person name="Horiuchi H."/>
            <person name="Huang J."/>
            <person name="Humphray S."/>
            <person name="Jimenez J."/>
            <person name="Keller N."/>
            <person name="Khouri H."/>
            <person name="Kitamoto K."/>
            <person name="Kobayashi T."/>
            <person name="Konzack S."/>
            <person name="Kulkarni R."/>
            <person name="Kumagai T."/>
            <person name="Lafton A."/>
            <person name="Latge J.-P."/>
            <person name="Li W."/>
            <person name="Lord A."/>
            <person name="Lu C."/>
            <person name="Majoros W.H."/>
            <person name="May G.S."/>
            <person name="Miller B.L."/>
            <person name="Mohamoud Y."/>
            <person name="Molina M."/>
            <person name="Monod M."/>
            <person name="Mouyna I."/>
            <person name="Mulligan S."/>
            <person name="Murphy L.D."/>
            <person name="O'Neil S."/>
            <person name="Paulsen I."/>
            <person name="Penalva M.A."/>
            <person name="Pertea M."/>
            <person name="Price C."/>
            <person name="Pritchard B.L."/>
            <person name="Quail M.A."/>
            <person name="Rabbinowitsch E."/>
            <person name="Rawlins N."/>
            <person name="Rajandream M.A."/>
            <person name="Reichard U."/>
            <person name="Renauld H."/>
            <person name="Robson G.D."/>
            <person name="Rodriguez de Cordoba S."/>
            <person name="Rodriguez-Pena J.M."/>
            <person name="Ronning C.M."/>
            <person name="Rutter S."/>
            <person name="Salzberg S.L."/>
            <person name="Sanchez M."/>
            <person name="Sanchez-Ferrero J.C."/>
            <person name="Saunders D."/>
            <person name="Seeger K."/>
            <person name="Squares R."/>
            <person name="Squares S."/>
            <person name="Takeuchi M."/>
            <person name="Tekaia F."/>
            <person name="Turner G."/>
            <person name="Vazquez de Aldana C.R."/>
            <person name="Weidman J."/>
            <person name="White O."/>
            <person name="Woodward J.R."/>
            <person name="Yu J.-H."/>
            <person name="Fraser C.M."/>
            <person name="Galagan J.E."/>
            <person name="Asai K."/>
            <person name="Machida M."/>
            <person name="Hall N."/>
            <person name="Barrell B.G."/>
            <person name="Denning D.W."/>
        </authorList>
    </citation>
    <scope>NUCLEOTIDE SEQUENCE [LARGE SCALE GENOMIC DNA]</scope>
    <source>
        <strain>ATCC MYA-4609 / CBS 101355 / FGSC A1100 / Af293</strain>
    </source>
</reference>
<name>MAK5_ASPFU</name>
<feature type="chain" id="PRO_0000232229" description="ATP-dependent RNA helicase mak5">
    <location>
        <begin position="1"/>
        <end position="777"/>
    </location>
</feature>
<feature type="domain" description="Helicase ATP-binding" evidence="2">
    <location>
        <begin position="232"/>
        <end position="444"/>
    </location>
</feature>
<feature type="domain" description="Helicase C-terminal" evidence="3">
    <location>
        <begin position="496"/>
        <end position="646"/>
    </location>
</feature>
<feature type="region of interest" description="Disordered" evidence="4">
    <location>
        <begin position="1"/>
        <end position="38"/>
    </location>
</feature>
<feature type="region of interest" description="Disordered" evidence="4">
    <location>
        <begin position="92"/>
        <end position="176"/>
    </location>
</feature>
<feature type="region of interest" description="Disordered" evidence="4">
    <location>
        <begin position="392"/>
        <end position="417"/>
    </location>
</feature>
<feature type="region of interest" description="Disordered" evidence="4">
    <location>
        <begin position="692"/>
        <end position="720"/>
    </location>
</feature>
<feature type="short sequence motif" description="Q motif">
    <location>
        <begin position="201"/>
        <end position="229"/>
    </location>
</feature>
<feature type="short sequence motif" description="DEAD box">
    <location>
        <begin position="370"/>
        <end position="373"/>
    </location>
</feature>
<feature type="compositionally biased region" description="Basic and acidic residues" evidence="4">
    <location>
        <begin position="1"/>
        <end position="10"/>
    </location>
</feature>
<feature type="compositionally biased region" description="Acidic residues" evidence="4">
    <location>
        <begin position="101"/>
        <end position="119"/>
    </location>
</feature>
<feature type="compositionally biased region" description="Basic and acidic residues" evidence="4">
    <location>
        <begin position="130"/>
        <end position="171"/>
    </location>
</feature>
<feature type="compositionally biased region" description="Acidic residues" evidence="4">
    <location>
        <begin position="395"/>
        <end position="413"/>
    </location>
</feature>
<feature type="compositionally biased region" description="Basic residues" evidence="4">
    <location>
        <begin position="703"/>
        <end position="713"/>
    </location>
</feature>
<feature type="binding site" evidence="2">
    <location>
        <begin position="245"/>
        <end position="252"/>
    </location>
    <ligand>
        <name>ATP</name>
        <dbReference type="ChEBI" id="CHEBI:30616"/>
    </ligand>
</feature>
<sequence>MGQKRQRDSKNLTLHSKKRKKAENATATDSDDGWDGIVGADELNWKEVALPDRLEDAGGFYGLEEIEGVDIVRGSGNGEVKFKAVAGKPKKSILKKKALEDENPEYEEEWSGFSDDDADRPENASSTVVEKPEKSDRKADKKSEKNADKKEAKDAKKKEAKAAKKEQKEKGSAIQRDMSINAGLSFAALQDTEEDDGADVSAWDSLGLSPEILTGLSKMKFGSPTSVQEACIPQILEGHDVIGKASTGSGKTLAFGIPILEHYLEKKRDDISAQKEQMSEKDSTPIALILSPTRELAHQLSKHIGELIAQAPGVNARIALLTGGLSVQKQQRLLSGADIVIGTPGRVWEILSTGQGLIRKMQQIKFLVVDEADRLLSEGHFKEVEEILNSLDRVEDGEVPDGEDQASEEESDPSSERQTLVFSATFHRDLQQKLAGKRKWTRGDIMDKKESMDYLLQKLNFREEKPKFIDMNPISQMADNLKEGIVECGAMEKDLFLYTLLLYHPKHRTLVFTNSISAVRRLTKLLQTLQLPALALHSSMAQKARLRSVERFSSPSSDPSTILIATDVAARGLDIKGIDLVIHYHAPRTADTYVHRSGRTARAGASGKSVIICGPDEMVGVVRLAAKVHANMANGKKLPLESLELDRRVVSRVKPRVSLASRITDANIAKEKISAEDNWLRNAAEDLGVEYDSEEFDESNGKGRGRGRGRHQKQKEVGSVSKAELAGLRAELKQLLSQRVNVGVSERYLTAGRVDIDALLRGEGNTSFLGPVDPLNF</sequence>
<protein>
    <recommendedName>
        <fullName>ATP-dependent RNA helicase mak5</fullName>
        <ecNumber>3.6.4.13</ecNumber>
    </recommendedName>
</protein>
<gene>
    <name type="primary">mak5</name>
    <name type="ORF">AFUA_6G08900</name>
</gene>
<proteinExistence type="inferred from homology"/>